<organism>
    <name type="scientific">Methanopyrus kandleri (strain AV19 / DSM 6324 / JCM 9639 / NBRC 100938)</name>
    <dbReference type="NCBI Taxonomy" id="190192"/>
    <lineage>
        <taxon>Archaea</taxon>
        <taxon>Methanobacteriati</taxon>
        <taxon>Methanobacteriota</taxon>
        <taxon>Methanomada group</taxon>
        <taxon>Methanopyri</taxon>
        <taxon>Methanopyrales</taxon>
        <taxon>Methanopyraceae</taxon>
        <taxon>Methanopyrus</taxon>
    </lineage>
</organism>
<name>ASPD_METKA</name>
<feature type="chain" id="PRO_0000144897" description="L-aspartate dehydrogenase">
    <location>
        <begin position="1"/>
        <end position="262"/>
    </location>
</feature>
<feature type="active site" evidence="1">
    <location>
        <position position="213"/>
    </location>
</feature>
<feature type="binding site" evidence="1">
    <location>
        <position position="128"/>
    </location>
    <ligand>
        <name>NAD(+)</name>
        <dbReference type="ChEBI" id="CHEBI:57540"/>
    </ligand>
</feature>
<feature type="binding site" evidence="1">
    <location>
        <position position="183"/>
    </location>
    <ligand>
        <name>NAD(+)</name>
        <dbReference type="ChEBI" id="CHEBI:57540"/>
    </ligand>
</feature>
<proteinExistence type="inferred from homology"/>
<reference key="1">
    <citation type="journal article" date="2002" name="Proc. Natl. Acad. Sci. U.S.A.">
        <title>The complete genome of hyperthermophile Methanopyrus kandleri AV19 and monophyly of archaeal methanogens.</title>
        <authorList>
            <person name="Slesarev A.I."/>
            <person name="Mezhevaya K.V."/>
            <person name="Makarova K.S."/>
            <person name="Polushin N.N."/>
            <person name="Shcherbinina O.V."/>
            <person name="Shakhova V.V."/>
            <person name="Belova G.I."/>
            <person name="Aravind L."/>
            <person name="Natale D.A."/>
            <person name="Rogozin I.B."/>
            <person name="Tatusov R.L."/>
            <person name="Wolf Y.I."/>
            <person name="Stetter K.O."/>
            <person name="Malykh A.G."/>
            <person name="Koonin E.V."/>
            <person name="Kozyavkin S.A."/>
        </authorList>
    </citation>
    <scope>NUCLEOTIDE SEQUENCE [LARGE SCALE GENOMIC DNA]</scope>
    <source>
        <strain>AV19 / DSM 6324 / JCM 9639 / NBRC 100938</strain>
    </source>
</reference>
<evidence type="ECO:0000255" key="1">
    <source>
        <dbReference type="HAMAP-Rule" id="MF_01265"/>
    </source>
</evidence>
<gene>
    <name evidence="1" type="primary">nadX</name>
    <name type="ordered locus">MK0094</name>
</gene>
<protein>
    <recommendedName>
        <fullName evidence="1">L-aspartate dehydrogenase</fullName>
        <ecNumber evidence="1">1.4.1.21</ecNumber>
    </recommendedName>
</protein>
<sequence>MKKLSLALVGAGGIGTTVLREIREGRLEGKVEPVLVCDRHPEKLKRIERWFPDCDTSTDLDDAMSAEADVLLEAASVEAAASLLPDALKRFDVIVMSVGALVLEEGLLSRCREVAEVTGHRLHVPSGAVGGLDVLRALRGRVREVTLTTIKPPKALNKDVSERTVLYEGSVRDAVRKFPKNINVAAAVSLAVGDPSLVTVRIVCDPEVSVNTHVIEVESSAGTYRFELRNEALPDNPKTSAVAAYSAVALIERMTEGIRVGT</sequence>
<keyword id="KW-0520">NAD</keyword>
<keyword id="KW-0521">NADP</keyword>
<keyword id="KW-0560">Oxidoreductase</keyword>
<keyword id="KW-0662">Pyridine nucleotide biosynthesis</keyword>
<keyword id="KW-1185">Reference proteome</keyword>
<comment type="function">
    <text evidence="1">Specifically catalyzes the NAD or NADP-dependent dehydrogenation of L-aspartate to iminoaspartate.</text>
</comment>
<comment type="catalytic activity">
    <reaction evidence="1">
        <text>L-aspartate + NADP(+) + H2O = oxaloacetate + NH4(+) + NADPH + H(+)</text>
        <dbReference type="Rhea" id="RHEA:11784"/>
        <dbReference type="ChEBI" id="CHEBI:15377"/>
        <dbReference type="ChEBI" id="CHEBI:15378"/>
        <dbReference type="ChEBI" id="CHEBI:16452"/>
        <dbReference type="ChEBI" id="CHEBI:28938"/>
        <dbReference type="ChEBI" id="CHEBI:29991"/>
        <dbReference type="ChEBI" id="CHEBI:57783"/>
        <dbReference type="ChEBI" id="CHEBI:58349"/>
        <dbReference type="EC" id="1.4.1.21"/>
    </reaction>
</comment>
<comment type="catalytic activity">
    <reaction evidence="1">
        <text>L-aspartate + NAD(+) + H2O = oxaloacetate + NH4(+) + NADH + H(+)</text>
        <dbReference type="Rhea" id="RHEA:11788"/>
        <dbReference type="ChEBI" id="CHEBI:15377"/>
        <dbReference type="ChEBI" id="CHEBI:15378"/>
        <dbReference type="ChEBI" id="CHEBI:16452"/>
        <dbReference type="ChEBI" id="CHEBI:28938"/>
        <dbReference type="ChEBI" id="CHEBI:29991"/>
        <dbReference type="ChEBI" id="CHEBI:57540"/>
        <dbReference type="ChEBI" id="CHEBI:57945"/>
        <dbReference type="EC" id="1.4.1.21"/>
    </reaction>
</comment>
<comment type="pathway">
    <text evidence="1">Cofactor biosynthesis; NAD(+) biosynthesis; iminoaspartate from L-aspartate (dehydrogenase route): step 1/1.</text>
</comment>
<comment type="miscellaneous">
    <text evidence="1">The iminoaspartate product is unstable in aqueous solution and can decompose to oxaloacetate and ammonia.</text>
</comment>
<comment type="similarity">
    <text evidence="1">Belongs to the L-aspartate dehydrogenase family.</text>
</comment>
<dbReference type="EC" id="1.4.1.21" evidence="1"/>
<dbReference type="EMBL" id="AE009439">
    <property type="protein sequence ID" value="AAM01311.1"/>
    <property type="molecule type" value="Genomic_DNA"/>
</dbReference>
<dbReference type="RefSeq" id="WP_011018466.1">
    <property type="nucleotide sequence ID" value="NC_003551.1"/>
</dbReference>
<dbReference type="SMR" id="Q8TZ45"/>
<dbReference type="FunCoup" id="Q8TZ45">
    <property type="interactions" value="85"/>
</dbReference>
<dbReference type="STRING" id="190192.MK0094"/>
<dbReference type="PaxDb" id="190192-MK0094"/>
<dbReference type="EnsemblBacteria" id="AAM01311">
    <property type="protein sequence ID" value="AAM01311"/>
    <property type="gene ID" value="MK0094"/>
</dbReference>
<dbReference type="GeneID" id="1477397"/>
<dbReference type="KEGG" id="mka:MK0094"/>
<dbReference type="HOGENOM" id="CLU_089550_0_0_2"/>
<dbReference type="InParanoid" id="Q8TZ45"/>
<dbReference type="OrthoDB" id="15415at2157"/>
<dbReference type="UniPathway" id="UPA00253">
    <property type="reaction ID" value="UER00456"/>
</dbReference>
<dbReference type="Proteomes" id="UP000001826">
    <property type="component" value="Chromosome"/>
</dbReference>
<dbReference type="GO" id="GO:0033735">
    <property type="term" value="F:aspartate dehydrogenase activity"/>
    <property type="evidence" value="ECO:0007669"/>
    <property type="project" value="UniProtKB-EC"/>
</dbReference>
<dbReference type="GO" id="GO:0051287">
    <property type="term" value="F:NAD binding"/>
    <property type="evidence" value="ECO:0007669"/>
    <property type="project" value="UniProtKB-UniRule"/>
</dbReference>
<dbReference type="GO" id="GO:0050661">
    <property type="term" value="F:NADP binding"/>
    <property type="evidence" value="ECO:0007669"/>
    <property type="project" value="UniProtKB-UniRule"/>
</dbReference>
<dbReference type="GO" id="GO:0016639">
    <property type="term" value="F:oxidoreductase activity, acting on the CH-NH2 group of donors, NAD or NADP as acceptor"/>
    <property type="evidence" value="ECO:0007669"/>
    <property type="project" value="UniProtKB-UniRule"/>
</dbReference>
<dbReference type="GO" id="GO:0009435">
    <property type="term" value="P:NAD biosynthetic process"/>
    <property type="evidence" value="ECO:0007669"/>
    <property type="project" value="UniProtKB-UniRule"/>
</dbReference>
<dbReference type="Gene3D" id="3.30.360.10">
    <property type="entry name" value="Dihydrodipicolinate Reductase, domain 2"/>
    <property type="match status" value="1"/>
</dbReference>
<dbReference type="Gene3D" id="3.40.50.720">
    <property type="entry name" value="NAD(P)-binding Rossmann-like Domain"/>
    <property type="match status" value="1"/>
</dbReference>
<dbReference type="HAMAP" id="MF_01265">
    <property type="entry name" value="NadX"/>
    <property type="match status" value="1"/>
</dbReference>
<dbReference type="InterPro" id="IPR005106">
    <property type="entry name" value="Asp/hSer_DH_NAD-bd"/>
</dbReference>
<dbReference type="InterPro" id="IPR002811">
    <property type="entry name" value="Asp_DH"/>
</dbReference>
<dbReference type="InterPro" id="IPR022487">
    <property type="entry name" value="Asp_DH_arc"/>
</dbReference>
<dbReference type="InterPro" id="IPR020626">
    <property type="entry name" value="Asp_DH_prok"/>
</dbReference>
<dbReference type="InterPro" id="IPR011182">
    <property type="entry name" value="L-Asp_DH"/>
</dbReference>
<dbReference type="InterPro" id="IPR036291">
    <property type="entry name" value="NAD(P)-bd_dom_sf"/>
</dbReference>
<dbReference type="NCBIfam" id="TIGR03855">
    <property type="entry name" value="NAD_NadX"/>
    <property type="match status" value="1"/>
</dbReference>
<dbReference type="PANTHER" id="PTHR31873:SF6">
    <property type="entry name" value="ASPARTATE DEHYDROGENASE DOMAIN-CONTAINING PROTEIN"/>
    <property type="match status" value="1"/>
</dbReference>
<dbReference type="PANTHER" id="PTHR31873">
    <property type="entry name" value="L-ASPARTATE DEHYDROGENASE-RELATED"/>
    <property type="match status" value="1"/>
</dbReference>
<dbReference type="Pfam" id="PF01958">
    <property type="entry name" value="Asp_DH_C"/>
    <property type="match status" value="1"/>
</dbReference>
<dbReference type="Pfam" id="PF03447">
    <property type="entry name" value="NAD_binding_3"/>
    <property type="match status" value="1"/>
</dbReference>
<dbReference type="PIRSF" id="PIRSF005227">
    <property type="entry name" value="Asp_dh_NAD_syn"/>
    <property type="match status" value="1"/>
</dbReference>
<dbReference type="SUPFAM" id="SSF55347">
    <property type="entry name" value="Glyceraldehyde-3-phosphate dehydrogenase-like, C-terminal domain"/>
    <property type="match status" value="1"/>
</dbReference>
<dbReference type="SUPFAM" id="SSF51735">
    <property type="entry name" value="NAD(P)-binding Rossmann-fold domains"/>
    <property type="match status" value="1"/>
</dbReference>
<accession>Q8TZ45</accession>